<dbReference type="EMBL" id="CP001657">
    <property type="protein sequence ID" value="ACT12984.1"/>
    <property type="molecule type" value="Genomic_DNA"/>
</dbReference>
<dbReference type="RefSeq" id="WP_015840178.1">
    <property type="nucleotide sequence ID" value="NC_012917.1"/>
</dbReference>
<dbReference type="STRING" id="561230.PC1_1943"/>
<dbReference type="KEGG" id="pct:PC1_1943"/>
<dbReference type="eggNOG" id="COG2983">
    <property type="taxonomic scope" value="Bacteria"/>
</dbReference>
<dbReference type="HOGENOM" id="CLU_109769_2_0_6"/>
<dbReference type="OrthoDB" id="9786855at2"/>
<dbReference type="Proteomes" id="UP000002736">
    <property type="component" value="Chromosome"/>
</dbReference>
<dbReference type="HAMAP" id="MF_00676">
    <property type="entry name" value="UPF0260"/>
    <property type="match status" value="1"/>
</dbReference>
<dbReference type="InterPro" id="IPR005358">
    <property type="entry name" value="Puta_zinc/iron-chelating_dom"/>
</dbReference>
<dbReference type="InterPro" id="IPR008228">
    <property type="entry name" value="UCP006173"/>
</dbReference>
<dbReference type="NCBIfam" id="NF003498">
    <property type="entry name" value="PRK05170.1-1"/>
    <property type="match status" value="1"/>
</dbReference>
<dbReference type="NCBIfam" id="NF003501">
    <property type="entry name" value="PRK05170.1-5"/>
    <property type="match status" value="1"/>
</dbReference>
<dbReference type="NCBIfam" id="NF003507">
    <property type="entry name" value="PRK05170.2-5"/>
    <property type="match status" value="1"/>
</dbReference>
<dbReference type="PANTHER" id="PTHR37421">
    <property type="entry name" value="UPF0260 PROTEIN YCGN"/>
    <property type="match status" value="1"/>
</dbReference>
<dbReference type="PANTHER" id="PTHR37421:SF1">
    <property type="entry name" value="UPF0260 PROTEIN YCGN"/>
    <property type="match status" value="1"/>
</dbReference>
<dbReference type="Pfam" id="PF03692">
    <property type="entry name" value="CxxCxxCC"/>
    <property type="match status" value="1"/>
</dbReference>
<dbReference type="PIRSF" id="PIRSF006173">
    <property type="entry name" value="UCP006173"/>
    <property type="match status" value="1"/>
</dbReference>
<feature type="chain" id="PRO_1000212525" description="UPF0260 protein PC1_1943">
    <location>
        <begin position="1"/>
        <end position="148"/>
    </location>
</feature>
<proteinExistence type="inferred from homology"/>
<organism>
    <name type="scientific">Pectobacterium carotovorum subsp. carotovorum (strain PC1)</name>
    <dbReference type="NCBI Taxonomy" id="561230"/>
    <lineage>
        <taxon>Bacteria</taxon>
        <taxon>Pseudomonadati</taxon>
        <taxon>Pseudomonadota</taxon>
        <taxon>Gammaproteobacteria</taxon>
        <taxon>Enterobacterales</taxon>
        <taxon>Pectobacteriaceae</taxon>
        <taxon>Pectobacterium</taxon>
    </lineage>
</organism>
<name>Y1943_PECCP</name>
<reference key="1">
    <citation type="submission" date="2009-07" db="EMBL/GenBank/DDBJ databases">
        <title>Complete sequence of Pectobacterium carotovorum subsp. carotovorum PC1.</title>
        <authorList>
            <consortium name="US DOE Joint Genome Institute"/>
            <person name="Lucas S."/>
            <person name="Copeland A."/>
            <person name="Lapidus A."/>
            <person name="Glavina del Rio T."/>
            <person name="Tice H."/>
            <person name="Bruce D."/>
            <person name="Goodwin L."/>
            <person name="Pitluck S."/>
            <person name="Munk A.C."/>
            <person name="Brettin T."/>
            <person name="Detter J.C."/>
            <person name="Han C."/>
            <person name="Tapia R."/>
            <person name="Larimer F."/>
            <person name="Land M."/>
            <person name="Hauser L."/>
            <person name="Kyrpides N."/>
            <person name="Mikhailova N."/>
            <person name="Balakrishnan V."/>
            <person name="Glasner J."/>
            <person name="Perna N.T."/>
        </authorList>
    </citation>
    <scope>NUCLEOTIDE SEQUENCE [LARGE SCALE GENOMIC DNA]</scope>
    <source>
        <strain>PC1</strain>
    </source>
</reference>
<protein>
    <recommendedName>
        <fullName evidence="1">UPF0260 protein PC1_1943</fullName>
    </recommendedName>
</protein>
<evidence type="ECO:0000255" key="1">
    <source>
        <dbReference type="HAMAP-Rule" id="MF_00676"/>
    </source>
</evidence>
<comment type="similarity">
    <text evidence="1">Belongs to the UPF0260 family.</text>
</comment>
<gene>
    <name type="ordered locus">PC1_1943</name>
</gene>
<accession>C6DG41</accession>
<sequence length="148" mass="17764">MTERPFWQQKTLSEMSDDEWESLCDGCGQCCLHKLIDEDTEEIYFTNVACNQLNIKSCQCRNYEKRFEYEPDCIKLTRENLLTFNWLPATCAYRLIHEREDLPQWHPLVCGTKTAMHRERISVRHIAVRETEVVDWQDHILNKPEWAR</sequence>